<keyword id="KW-0285">Flavoprotein</keyword>
<keyword id="KW-0288">FMN</keyword>
<keyword id="KW-0560">Oxidoreductase</keyword>
<keyword id="KW-0664">Pyridoxine biosynthesis</keyword>
<keyword id="KW-1185">Reference proteome</keyword>
<feature type="chain" id="PRO_0000167758" description="Pyridoxine/pyridoxamine 5'-phosphate oxidase">
    <location>
        <begin position="1"/>
        <end position="218"/>
    </location>
</feature>
<feature type="binding site" evidence="1">
    <location>
        <begin position="14"/>
        <end position="17"/>
    </location>
    <ligand>
        <name>substrate</name>
    </ligand>
</feature>
<feature type="binding site" evidence="1">
    <location>
        <begin position="67"/>
        <end position="72"/>
    </location>
    <ligand>
        <name>FMN</name>
        <dbReference type="ChEBI" id="CHEBI:58210"/>
    </ligand>
</feature>
<feature type="binding site" evidence="1">
    <location>
        <position position="72"/>
    </location>
    <ligand>
        <name>substrate</name>
    </ligand>
</feature>
<feature type="binding site" evidence="1">
    <location>
        <begin position="82"/>
        <end position="83"/>
    </location>
    <ligand>
        <name>FMN</name>
        <dbReference type="ChEBI" id="CHEBI:58210"/>
    </ligand>
</feature>
<feature type="binding site" evidence="1">
    <location>
        <position position="88"/>
    </location>
    <ligand>
        <name>FMN</name>
        <dbReference type="ChEBI" id="CHEBI:58210"/>
    </ligand>
</feature>
<feature type="binding site" evidence="1">
    <location>
        <position position="89"/>
    </location>
    <ligand>
        <name>FMN</name>
        <dbReference type="ChEBI" id="CHEBI:58210"/>
    </ligand>
</feature>
<feature type="binding site" evidence="1">
    <location>
        <position position="111"/>
    </location>
    <ligand>
        <name>FMN</name>
        <dbReference type="ChEBI" id="CHEBI:58210"/>
    </ligand>
</feature>
<feature type="binding site" evidence="1">
    <location>
        <position position="129"/>
    </location>
    <ligand>
        <name>substrate</name>
    </ligand>
</feature>
<feature type="binding site" evidence="1">
    <location>
        <position position="133"/>
    </location>
    <ligand>
        <name>substrate</name>
    </ligand>
</feature>
<feature type="binding site" evidence="1">
    <location>
        <position position="137"/>
    </location>
    <ligand>
        <name>substrate</name>
    </ligand>
</feature>
<feature type="binding site" evidence="1">
    <location>
        <begin position="146"/>
        <end position="147"/>
    </location>
    <ligand>
        <name>FMN</name>
        <dbReference type="ChEBI" id="CHEBI:58210"/>
    </ligand>
</feature>
<feature type="binding site" evidence="1">
    <location>
        <position position="191"/>
    </location>
    <ligand>
        <name>FMN</name>
        <dbReference type="ChEBI" id="CHEBI:58210"/>
    </ligand>
</feature>
<feature type="binding site" evidence="1">
    <location>
        <begin position="197"/>
        <end position="199"/>
    </location>
    <ligand>
        <name>substrate</name>
    </ligand>
</feature>
<feature type="binding site" evidence="1">
    <location>
        <position position="201"/>
    </location>
    <ligand>
        <name>FMN</name>
        <dbReference type="ChEBI" id="CHEBI:58210"/>
    </ligand>
</feature>
<accession>Q3Z1Z4</accession>
<name>PDXH_SHISS</name>
<proteinExistence type="inferred from homology"/>
<reference key="1">
    <citation type="journal article" date="2005" name="Nucleic Acids Res.">
        <title>Genome dynamics and diversity of Shigella species, the etiologic agents of bacillary dysentery.</title>
        <authorList>
            <person name="Yang F."/>
            <person name="Yang J."/>
            <person name="Zhang X."/>
            <person name="Chen L."/>
            <person name="Jiang Y."/>
            <person name="Yan Y."/>
            <person name="Tang X."/>
            <person name="Wang J."/>
            <person name="Xiong Z."/>
            <person name="Dong J."/>
            <person name="Xue Y."/>
            <person name="Zhu Y."/>
            <person name="Xu X."/>
            <person name="Sun L."/>
            <person name="Chen S."/>
            <person name="Nie H."/>
            <person name="Peng J."/>
            <person name="Xu J."/>
            <person name="Wang Y."/>
            <person name="Yuan Z."/>
            <person name="Wen Y."/>
            <person name="Yao Z."/>
            <person name="Shen Y."/>
            <person name="Qiang B."/>
            <person name="Hou Y."/>
            <person name="Yu J."/>
            <person name="Jin Q."/>
        </authorList>
    </citation>
    <scope>NUCLEOTIDE SEQUENCE [LARGE SCALE GENOMIC DNA]</scope>
    <source>
        <strain>Ss046</strain>
    </source>
</reference>
<evidence type="ECO:0000255" key="1">
    <source>
        <dbReference type="HAMAP-Rule" id="MF_01629"/>
    </source>
</evidence>
<gene>
    <name evidence="1" type="primary">pdxH</name>
    <name type="ordered locus">SSON_1518</name>
</gene>
<comment type="function">
    <text evidence="1">Catalyzes the oxidation of either pyridoxine 5'-phosphate (PNP) or pyridoxamine 5'-phosphate (PMP) into pyridoxal 5'-phosphate (PLP).</text>
</comment>
<comment type="catalytic activity">
    <reaction evidence="1">
        <text>pyridoxamine 5'-phosphate + O2 + H2O = pyridoxal 5'-phosphate + H2O2 + NH4(+)</text>
        <dbReference type="Rhea" id="RHEA:15817"/>
        <dbReference type="ChEBI" id="CHEBI:15377"/>
        <dbReference type="ChEBI" id="CHEBI:15379"/>
        <dbReference type="ChEBI" id="CHEBI:16240"/>
        <dbReference type="ChEBI" id="CHEBI:28938"/>
        <dbReference type="ChEBI" id="CHEBI:58451"/>
        <dbReference type="ChEBI" id="CHEBI:597326"/>
        <dbReference type="EC" id="1.4.3.5"/>
    </reaction>
</comment>
<comment type="catalytic activity">
    <reaction evidence="1">
        <text>pyridoxine 5'-phosphate + O2 = pyridoxal 5'-phosphate + H2O2</text>
        <dbReference type="Rhea" id="RHEA:15149"/>
        <dbReference type="ChEBI" id="CHEBI:15379"/>
        <dbReference type="ChEBI" id="CHEBI:16240"/>
        <dbReference type="ChEBI" id="CHEBI:58589"/>
        <dbReference type="ChEBI" id="CHEBI:597326"/>
        <dbReference type="EC" id="1.4.3.5"/>
    </reaction>
</comment>
<comment type="cofactor">
    <cofactor evidence="1">
        <name>FMN</name>
        <dbReference type="ChEBI" id="CHEBI:58210"/>
    </cofactor>
    <text evidence="1">Binds 1 FMN per subunit.</text>
</comment>
<comment type="pathway">
    <text evidence="1">Cofactor metabolism; pyridoxal 5'-phosphate salvage; pyridoxal 5'-phosphate from pyridoxamine 5'-phosphate: step 1/1.</text>
</comment>
<comment type="pathway">
    <text evidence="1">Cofactor metabolism; pyridoxal 5'-phosphate salvage; pyridoxal 5'-phosphate from pyridoxine 5'-phosphate: step 1/1.</text>
</comment>
<comment type="subunit">
    <text evidence="1">Homodimer.</text>
</comment>
<comment type="similarity">
    <text evidence="1">Belongs to the pyridoxamine 5'-phosphate oxidase family.</text>
</comment>
<sequence>MSDNDELQQIAHLRREYTKGGLRRRDLPADPLTLFERWLSQACEAKLADPTAMVVATVDEHAQPYQRIVLLKHYDEKGMVFYTNLGSRKAHQIENNPRVSLLFPWHTLERQVMVIGKAERLSTLEVMKYFHSRPRDSQIGAWVSKQSSRISARGILESKFLELKQKFQQGEVPLPSFWGGFRVSLEQIEFWQGGEHRLHDRFLYQRENDAWKIDRLAP</sequence>
<organism>
    <name type="scientific">Shigella sonnei (strain Ss046)</name>
    <dbReference type="NCBI Taxonomy" id="300269"/>
    <lineage>
        <taxon>Bacteria</taxon>
        <taxon>Pseudomonadati</taxon>
        <taxon>Pseudomonadota</taxon>
        <taxon>Gammaproteobacteria</taxon>
        <taxon>Enterobacterales</taxon>
        <taxon>Enterobacteriaceae</taxon>
        <taxon>Shigella</taxon>
    </lineage>
</organism>
<dbReference type="EC" id="1.4.3.5" evidence="1"/>
<dbReference type="EMBL" id="CP000038">
    <property type="protein sequence ID" value="AAZ88218.1"/>
    <property type="molecule type" value="Genomic_DNA"/>
</dbReference>
<dbReference type="RefSeq" id="WP_001282313.1">
    <property type="nucleotide sequence ID" value="NC_007384.1"/>
</dbReference>
<dbReference type="SMR" id="Q3Z1Z4"/>
<dbReference type="GeneID" id="93775792"/>
<dbReference type="KEGG" id="ssn:SSON_1518"/>
<dbReference type="HOGENOM" id="CLU_032263_2_2_6"/>
<dbReference type="UniPathway" id="UPA01068">
    <property type="reaction ID" value="UER00304"/>
</dbReference>
<dbReference type="UniPathway" id="UPA01068">
    <property type="reaction ID" value="UER00305"/>
</dbReference>
<dbReference type="Proteomes" id="UP000002529">
    <property type="component" value="Chromosome"/>
</dbReference>
<dbReference type="GO" id="GO:0010181">
    <property type="term" value="F:FMN binding"/>
    <property type="evidence" value="ECO:0007669"/>
    <property type="project" value="UniProtKB-UniRule"/>
</dbReference>
<dbReference type="GO" id="GO:0004733">
    <property type="term" value="F:pyridoxamine phosphate oxidase activity"/>
    <property type="evidence" value="ECO:0007669"/>
    <property type="project" value="UniProtKB-UniRule"/>
</dbReference>
<dbReference type="GO" id="GO:0008615">
    <property type="term" value="P:pyridoxine biosynthetic process"/>
    <property type="evidence" value="ECO:0007669"/>
    <property type="project" value="UniProtKB-KW"/>
</dbReference>
<dbReference type="FunFam" id="2.30.110.10:FF:000001">
    <property type="entry name" value="Pyridoxine/pyridoxamine 5'-phosphate oxidase"/>
    <property type="match status" value="1"/>
</dbReference>
<dbReference type="Gene3D" id="2.30.110.10">
    <property type="entry name" value="Electron Transport, Fmn-binding Protein, Chain A"/>
    <property type="match status" value="1"/>
</dbReference>
<dbReference type="HAMAP" id="MF_01629">
    <property type="entry name" value="PdxH"/>
    <property type="match status" value="1"/>
</dbReference>
<dbReference type="InterPro" id="IPR000659">
    <property type="entry name" value="Pyridox_Oxase"/>
</dbReference>
<dbReference type="InterPro" id="IPR019740">
    <property type="entry name" value="Pyridox_Oxase_CS"/>
</dbReference>
<dbReference type="InterPro" id="IPR011576">
    <property type="entry name" value="Pyridox_Oxase_N"/>
</dbReference>
<dbReference type="InterPro" id="IPR019576">
    <property type="entry name" value="Pyridoxamine_oxidase_dimer_C"/>
</dbReference>
<dbReference type="InterPro" id="IPR012349">
    <property type="entry name" value="Split_barrel_FMN-bd"/>
</dbReference>
<dbReference type="NCBIfam" id="TIGR00558">
    <property type="entry name" value="pdxH"/>
    <property type="match status" value="1"/>
</dbReference>
<dbReference type="NCBIfam" id="NF004231">
    <property type="entry name" value="PRK05679.1"/>
    <property type="match status" value="1"/>
</dbReference>
<dbReference type="PANTHER" id="PTHR10851:SF0">
    <property type="entry name" value="PYRIDOXINE-5'-PHOSPHATE OXIDASE"/>
    <property type="match status" value="1"/>
</dbReference>
<dbReference type="PANTHER" id="PTHR10851">
    <property type="entry name" value="PYRIDOXINE-5-PHOSPHATE OXIDASE"/>
    <property type="match status" value="1"/>
</dbReference>
<dbReference type="Pfam" id="PF10590">
    <property type="entry name" value="PNP_phzG_C"/>
    <property type="match status" value="1"/>
</dbReference>
<dbReference type="Pfam" id="PF01243">
    <property type="entry name" value="PNPOx_N"/>
    <property type="match status" value="1"/>
</dbReference>
<dbReference type="PIRSF" id="PIRSF000190">
    <property type="entry name" value="Pyd_amn-ph_oxd"/>
    <property type="match status" value="1"/>
</dbReference>
<dbReference type="SUPFAM" id="SSF50475">
    <property type="entry name" value="FMN-binding split barrel"/>
    <property type="match status" value="1"/>
</dbReference>
<dbReference type="PROSITE" id="PS01064">
    <property type="entry name" value="PYRIDOX_OXIDASE"/>
    <property type="match status" value="1"/>
</dbReference>
<protein>
    <recommendedName>
        <fullName evidence="1">Pyridoxine/pyridoxamine 5'-phosphate oxidase</fullName>
        <ecNumber evidence="1">1.4.3.5</ecNumber>
    </recommendedName>
    <alternativeName>
        <fullName evidence="1">PNP/PMP oxidase</fullName>
        <shortName evidence="1">PNPOx</shortName>
    </alternativeName>
    <alternativeName>
        <fullName evidence="1">Pyridoxal 5'-phosphate synthase</fullName>
    </alternativeName>
</protein>